<evidence type="ECO:0000269" key="1">
    <source>
    </source>
</evidence>
<evidence type="ECO:0000305" key="2"/>
<gene>
    <name type="primary">RPS12</name>
</gene>
<protein>
    <recommendedName>
        <fullName evidence="2">Small ribosomal subunit protein uS12m</fullName>
    </recommendedName>
    <alternativeName>
        <fullName>Ribosomal protein S12, mitochondrial</fullName>
    </alternativeName>
</protein>
<sequence>MRVLFLYGLCVRFLYFCLVLYFSPRLPSSGNRRCLYAICYMFNILWFFCVFCCVCFLNHLLFIVEGGGFIDLPGVKYFSRFFLNA</sequence>
<feature type="chain" id="PRO_0000146452" description="Small ribosomal subunit protein uS12m">
    <location>
        <begin position="1"/>
        <end position="85"/>
    </location>
</feature>
<proteinExistence type="evidence at transcript level"/>
<dbReference type="EMBL" id="L07546">
    <property type="protein sequence ID" value="AAA31883.1"/>
    <property type="molecule type" value="mRNA"/>
</dbReference>
<dbReference type="PIR" id="A42056">
    <property type="entry name" value="A42056"/>
</dbReference>
<dbReference type="GO" id="GO:0020023">
    <property type="term" value="C:kinetoplast"/>
    <property type="evidence" value="ECO:0007669"/>
    <property type="project" value="UniProtKB-SubCell"/>
</dbReference>
<dbReference type="GO" id="GO:1990904">
    <property type="term" value="C:ribonucleoprotein complex"/>
    <property type="evidence" value="ECO:0007669"/>
    <property type="project" value="UniProtKB-KW"/>
</dbReference>
<dbReference type="GO" id="GO:0005840">
    <property type="term" value="C:ribosome"/>
    <property type="evidence" value="ECO:0007669"/>
    <property type="project" value="UniProtKB-KW"/>
</dbReference>
<dbReference type="InterPro" id="IPR035306">
    <property type="entry name" value="Ribosomal_uS12m"/>
</dbReference>
<dbReference type="Pfam" id="PF17487">
    <property type="entry name" value="Ribosomal_S12"/>
    <property type="match status" value="1"/>
</dbReference>
<accession>Q34940</accession>
<keyword id="KW-0419">Kinetoplast</keyword>
<keyword id="KW-0496">Mitochondrion</keyword>
<keyword id="KW-0687">Ribonucleoprotein</keyword>
<keyword id="KW-0689">Ribosomal protein</keyword>
<keyword id="KW-0691">RNA editing</keyword>
<comment type="function">
    <text>Protein S12 is involved in the translation initiation step.</text>
</comment>
<comment type="subcellular location">
    <subcellularLocation>
        <location>Mitochondrion matrix</location>
        <location>Kinetoplast</location>
    </subcellularLocation>
</comment>
<comment type="RNA editing" locationType="Not_applicable">
    <text evidence="1">In the completely edited RNA, 117 uridines are added at 49 sites and 32 uridines are deleted at 13 sites.</text>
</comment>
<comment type="similarity">
    <text evidence="2">Belongs to the universal ribosomal protein uS12 family.</text>
</comment>
<reference key="1">
    <citation type="journal article" date="1984" name="J. Biol. Chem.">
        <title>Sequences of six genes and several open reading frames in the kinetoplast maxicircle DNA of Leishmania tarentolae.</title>
        <authorList>
            <person name="de la Cruz V.F."/>
            <person name="Neckelmann N."/>
            <person name="Simpson L."/>
        </authorList>
    </citation>
    <scope>NUCLEOTIDE SEQUENCE [MRNA]</scope>
</reference>
<reference key="2">
    <citation type="journal article" date="1992" name="Mol. Cell. Biol.">
        <title>An intergenic G-rich region in Leishmania tarentolae kinetoplast maxicircle DNA is a pan-edited cryptogene encoding ribosomal protein S12.</title>
        <authorList>
            <person name="Maslov D.A."/>
            <person name="Sturm N.R."/>
            <person name="Niner B.M."/>
            <person name="Gruszynski E.S."/>
            <person name="Peris M."/>
            <person name="Simpson L."/>
        </authorList>
    </citation>
    <scope>NUCLEOTIDE SEQUENCE [MRNA]</scope>
    <scope>RNA EDITING</scope>
</reference>
<organism>
    <name type="scientific">Leishmania tarentolae</name>
    <name type="common">Sauroleishmania tarentolae</name>
    <dbReference type="NCBI Taxonomy" id="5689"/>
    <lineage>
        <taxon>Eukaryota</taxon>
        <taxon>Discoba</taxon>
        <taxon>Euglenozoa</taxon>
        <taxon>Kinetoplastea</taxon>
        <taxon>Metakinetoplastina</taxon>
        <taxon>Trypanosomatida</taxon>
        <taxon>Trypanosomatidae</taxon>
        <taxon>Leishmaniinae</taxon>
        <taxon>Leishmania</taxon>
        <taxon>lizard Leishmania</taxon>
    </lineage>
</organism>
<geneLocation type="mitochondrion"/>
<name>RT12_LEITA</name>